<name>GLGA_PSEF5</name>
<sequence>MISAVLDTQGDHPQQQAGDRAAPSVPVPGNKTVLPLARPNPNRKRVLFVTSEIADLVKTGGLGDVSAALPRAMAHLHDVRVLIPGYPQVLHSENPIHIIGELGGHAALPACKIGRMDMPDGLVIYVLICPELYEREGTPYGANNGRDWPDNHIRFARLGLAAADIAANLAQIHWCPDLVHAHDWPAGLAPAYMHWRGQRTPTLFTIHNLAYQGVVSLASCPELGIPEHALQQEGMEFYGKLSFLKAGMAYASHITTVSATYAQEITTPAFGCGLDGFLASKTQQGLLSGIPNGIDESWDAATDAHLLTPFSIGDWDGKAANAAHVRQMFGLDASSGPLFAVVSRLVYQKGLDLTEAVAEFIVQSGGQIAIIGRGEPEEEQSMRALARRFPGRIGVHIGFNETDARRMFAGSDFLLMPSRYEPCGLSQMYAQRFGSLPVARNTGGLADTIENGVTGFLFDESTVASYQEALTRAFKVFAYPALLNAMRCRAMAAPFNWCKAVEPYAELYEQLVAKALGQAARQ</sequence>
<comment type="function">
    <text evidence="1">Synthesizes alpha-1,4-glucan chains using ADP-glucose.</text>
</comment>
<comment type="catalytic activity">
    <reaction evidence="1">
        <text>[(1-&gt;4)-alpha-D-glucosyl](n) + ADP-alpha-D-glucose = [(1-&gt;4)-alpha-D-glucosyl](n+1) + ADP + H(+)</text>
        <dbReference type="Rhea" id="RHEA:18189"/>
        <dbReference type="Rhea" id="RHEA-COMP:9584"/>
        <dbReference type="Rhea" id="RHEA-COMP:9587"/>
        <dbReference type="ChEBI" id="CHEBI:15378"/>
        <dbReference type="ChEBI" id="CHEBI:15444"/>
        <dbReference type="ChEBI" id="CHEBI:57498"/>
        <dbReference type="ChEBI" id="CHEBI:456216"/>
        <dbReference type="EC" id="2.4.1.21"/>
    </reaction>
</comment>
<comment type="pathway">
    <text evidence="1">Glycan biosynthesis; glycogen biosynthesis.</text>
</comment>
<comment type="similarity">
    <text evidence="1">Belongs to the glycosyltransferase 1 family. Bacterial/plant glycogen synthase subfamily.</text>
</comment>
<dbReference type="EC" id="2.4.1.21" evidence="1"/>
<dbReference type="EMBL" id="CP000076">
    <property type="protein sequence ID" value="AAY92159.2"/>
    <property type="molecule type" value="Genomic_DNA"/>
</dbReference>
<dbReference type="RefSeq" id="WP_011061176.1">
    <property type="nucleotide sequence ID" value="NC_004129.6"/>
</dbReference>
<dbReference type="SMR" id="Q4KCP0"/>
<dbReference type="STRING" id="220664.PFL_2887"/>
<dbReference type="CAZy" id="GT5">
    <property type="family name" value="Glycosyltransferase Family 5"/>
</dbReference>
<dbReference type="GeneID" id="57475928"/>
<dbReference type="KEGG" id="pfl:PFL_2887"/>
<dbReference type="PATRIC" id="fig|220664.5.peg.2942"/>
<dbReference type="eggNOG" id="COG0297">
    <property type="taxonomic scope" value="Bacteria"/>
</dbReference>
<dbReference type="HOGENOM" id="CLU_009583_18_4_6"/>
<dbReference type="UniPathway" id="UPA00164"/>
<dbReference type="Proteomes" id="UP000008540">
    <property type="component" value="Chromosome"/>
</dbReference>
<dbReference type="GO" id="GO:0009011">
    <property type="term" value="F:alpha-1,4-glucan glucosyltransferase (ADP-glucose donor) activity"/>
    <property type="evidence" value="ECO:0007669"/>
    <property type="project" value="UniProtKB-UniRule"/>
</dbReference>
<dbReference type="GO" id="GO:0004373">
    <property type="term" value="F:alpha-1,4-glucan glucosyltransferase (UDP-glucose donor) activity"/>
    <property type="evidence" value="ECO:0007669"/>
    <property type="project" value="InterPro"/>
</dbReference>
<dbReference type="GO" id="GO:0005978">
    <property type="term" value="P:glycogen biosynthetic process"/>
    <property type="evidence" value="ECO:0007669"/>
    <property type="project" value="UniProtKB-UniRule"/>
</dbReference>
<dbReference type="CDD" id="cd03791">
    <property type="entry name" value="GT5_Glycogen_synthase_DULL1-like"/>
    <property type="match status" value="1"/>
</dbReference>
<dbReference type="Gene3D" id="3.40.50.2000">
    <property type="entry name" value="Glycogen Phosphorylase B"/>
    <property type="match status" value="2"/>
</dbReference>
<dbReference type="HAMAP" id="MF_00484">
    <property type="entry name" value="Glycogen_synth"/>
    <property type="match status" value="1"/>
</dbReference>
<dbReference type="InterPro" id="IPR001296">
    <property type="entry name" value="Glyco_trans_1"/>
</dbReference>
<dbReference type="InterPro" id="IPR011835">
    <property type="entry name" value="GS/SS"/>
</dbReference>
<dbReference type="InterPro" id="IPR013534">
    <property type="entry name" value="Starch_synth_cat_dom"/>
</dbReference>
<dbReference type="NCBIfam" id="TIGR02095">
    <property type="entry name" value="glgA"/>
    <property type="match status" value="1"/>
</dbReference>
<dbReference type="NCBIfam" id="NF001899">
    <property type="entry name" value="PRK00654.1-2"/>
    <property type="match status" value="1"/>
</dbReference>
<dbReference type="NCBIfam" id="NF001901">
    <property type="entry name" value="PRK00654.1-5"/>
    <property type="match status" value="1"/>
</dbReference>
<dbReference type="PANTHER" id="PTHR45825:SF8">
    <property type="entry name" value="GLYCOGEN SYNTHASE"/>
    <property type="match status" value="1"/>
</dbReference>
<dbReference type="PANTHER" id="PTHR45825">
    <property type="entry name" value="GRANULE-BOUND STARCH SYNTHASE 1, CHLOROPLASTIC/AMYLOPLASTIC"/>
    <property type="match status" value="1"/>
</dbReference>
<dbReference type="Pfam" id="PF08323">
    <property type="entry name" value="Glyco_transf_5"/>
    <property type="match status" value="1"/>
</dbReference>
<dbReference type="Pfam" id="PF00534">
    <property type="entry name" value="Glycos_transf_1"/>
    <property type="match status" value="1"/>
</dbReference>
<dbReference type="SUPFAM" id="SSF53756">
    <property type="entry name" value="UDP-Glycosyltransferase/glycogen phosphorylase"/>
    <property type="match status" value="1"/>
</dbReference>
<feature type="chain" id="PRO_0000230256" description="Glycogen synthase">
    <location>
        <begin position="1"/>
        <end position="522"/>
    </location>
</feature>
<feature type="region of interest" description="Disordered" evidence="2">
    <location>
        <begin position="1"/>
        <end position="29"/>
    </location>
</feature>
<feature type="binding site" evidence="1">
    <location>
        <position position="58"/>
    </location>
    <ligand>
        <name>ADP-alpha-D-glucose</name>
        <dbReference type="ChEBI" id="CHEBI:57498"/>
    </ligand>
</feature>
<gene>
    <name evidence="1" type="primary">glgA</name>
    <name type="ordered locus">PFL_2887</name>
</gene>
<protein>
    <recommendedName>
        <fullName evidence="1">Glycogen synthase</fullName>
        <ecNumber evidence="1">2.4.1.21</ecNumber>
    </recommendedName>
    <alternativeName>
        <fullName evidence="1">Starch [bacterial glycogen] synthase</fullName>
    </alternativeName>
</protein>
<keyword id="KW-0320">Glycogen biosynthesis</keyword>
<keyword id="KW-0328">Glycosyltransferase</keyword>
<keyword id="KW-0808">Transferase</keyword>
<accession>Q4KCP0</accession>
<organism>
    <name type="scientific">Pseudomonas fluorescens (strain ATCC BAA-477 / NRRL B-23932 / Pf-5)</name>
    <dbReference type="NCBI Taxonomy" id="220664"/>
    <lineage>
        <taxon>Bacteria</taxon>
        <taxon>Pseudomonadati</taxon>
        <taxon>Pseudomonadota</taxon>
        <taxon>Gammaproteobacteria</taxon>
        <taxon>Pseudomonadales</taxon>
        <taxon>Pseudomonadaceae</taxon>
        <taxon>Pseudomonas</taxon>
    </lineage>
</organism>
<evidence type="ECO:0000255" key="1">
    <source>
        <dbReference type="HAMAP-Rule" id="MF_00484"/>
    </source>
</evidence>
<evidence type="ECO:0000256" key="2">
    <source>
        <dbReference type="SAM" id="MobiDB-lite"/>
    </source>
</evidence>
<reference key="1">
    <citation type="journal article" date="2005" name="Nat. Biotechnol.">
        <title>Complete genome sequence of the plant commensal Pseudomonas fluorescens Pf-5.</title>
        <authorList>
            <person name="Paulsen I.T."/>
            <person name="Press C.M."/>
            <person name="Ravel J."/>
            <person name="Kobayashi D.Y."/>
            <person name="Myers G.S.A."/>
            <person name="Mavrodi D.V."/>
            <person name="DeBoy R.T."/>
            <person name="Seshadri R."/>
            <person name="Ren Q."/>
            <person name="Madupu R."/>
            <person name="Dodson R.J."/>
            <person name="Durkin A.S."/>
            <person name="Brinkac L.M."/>
            <person name="Daugherty S.C."/>
            <person name="Sullivan S.A."/>
            <person name="Rosovitz M.J."/>
            <person name="Gwinn M.L."/>
            <person name="Zhou L."/>
            <person name="Schneider D.J."/>
            <person name="Cartinhour S.W."/>
            <person name="Nelson W.C."/>
            <person name="Weidman J."/>
            <person name="Watkins K."/>
            <person name="Tran K."/>
            <person name="Khouri H."/>
            <person name="Pierson E.A."/>
            <person name="Pierson L.S. III"/>
            <person name="Thomashow L.S."/>
            <person name="Loper J.E."/>
        </authorList>
    </citation>
    <scope>NUCLEOTIDE SEQUENCE [LARGE SCALE GENOMIC DNA]</scope>
    <source>
        <strain>ATCC BAA-477 / NRRL B-23932 / Pf-5</strain>
    </source>
</reference>
<proteinExistence type="inferred from homology"/>